<accession>Q3Z146</accession>
<name>PUUD_SHISS</name>
<dbReference type="EC" id="3.5.1.94"/>
<dbReference type="EMBL" id="CP000038">
    <property type="protein sequence ID" value="AAZ88516.1"/>
    <property type="status" value="ALT_INIT"/>
    <property type="molecule type" value="Genomic_DNA"/>
</dbReference>
<dbReference type="RefSeq" id="WP_001300506.1">
    <property type="nucleotide sequence ID" value="NC_007384.1"/>
</dbReference>
<dbReference type="SMR" id="Q3Z146"/>
<dbReference type="MEROPS" id="C26.961"/>
<dbReference type="GeneID" id="93775424"/>
<dbReference type="KEGG" id="ssn:SSON_1842"/>
<dbReference type="HOGENOM" id="CLU_030756_0_0_6"/>
<dbReference type="UniPathway" id="UPA00188">
    <property type="reaction ID" value="UER00883"/>
</dbReference>
<dbReference type="Proteomes" id="UP000002529">
    <property type="component" value="Chromosome"/>
</dbReference>
<dbReference type="GO" id="GO:0005829">
    <property type="term" value="C:cytosol"/>
    <property type="evidence" value="ECO:0007669"/>
    <property type="project" value="TreeGrafter"/>
</dbReference>
<dbReference type="GO" id="GO:0033969">
    <property type="term" value="F:gamma-glutamyl-gamma-aminobutyrate hydrolase activity"/>
    <property type="evidence" value="ECO:0007669"/>
    <property type="project" value="UniProtKB-EC"/>
</dbReference>
<dbReference type="GO" id="GO:0009447">
    <property type="term" value="P:putrescine catabolic process"/>
    <property type="evidence" value="ECO:0007669"/>
    <property type="project" value="UniProtKB-UniPathway"/>
</dbReference>
<dbReference type="CDD" id="cd01745">
    <property type="entry name" value="GATase1_2"/>
    <property type="match status" value="1"/>
</dbReference>
<dbReference type="FunFam" id="3.40.50.880:FF:000030">
    <property type="entry name" value="Gamma-glutamyl-gamma-aminobutyrate hydrolase PuuD"/>
    <property type="match status" value="1"/>
</dbReference>
<dbReference type="Gene3D" id="3.40.50.880">
    <property type="match status" value="1"/>
</dbReference>
<dbReference type="InterPro" id="IPR029062">
    <property type="entry name" value="Class_I_gatase-like"/>
</dbReference>
<dbReference type="InterPro" id="IPR011697">
    <property type="entry name" value="Peptidase_C26"/>
</dbReference>
<dbReference type="InterPro" id="IPR044668">
    <property type="entry name" value="PuuD-like"/>
</dbReference>
<dbReference type="NCBIfam" id="NF008471">
    <property type="entry name" value="PRK11366.1"/>
    <property type="match status" value="1"/>
</dbReference>
<dbReference type="PANTHER" id="PTHR43235">
    <property type="entry name" value="GLUTAMINE AMIDOTRANSFERASE PB2B2.05-RELATED"/>
    <property type="match status" value="1"/>
</dbReference>
<dbReference type="PANTHER" id="PTHR43235:SF1">
    <property type="entry name" value="GLUTAMINE AMIDOTRANSFERASE PB2B2.05-RELATED"/>
    <property type="match status" value="1"/>
</dbReference>
<dbReference type="Pfam" id="PF07722">
    <property type="entry name" value="Peptidase_C26"/>
    <property type="match status" value="1"/>
</dbReference>
<dbReference type="SUPFAM" id="SSF52317">
    <property type="entry name" value="Class I glutamine amidotransferase-like"/>
    <property type="match status" value="1"/>
</dbReference>
<dbReference type="PROSITE" id="PS51273">
    <property type="entry name" value="GATASE_TYPE_1"/>
    <property type="match status" value="1"/>
</dbReference>
<evidence type="ECO:0000250" key="1"/>
<evidence type="ECO:0000255" key="2">
    <source>
        <dbReference type="PROSITE-ProRule" id="PRU00605"/>
    </source>
</evidence>
<evidence type="ECO:0000305" key="3"/>
<organism>
    <name type="scientific">Shigella sonnei (strain Ss046)</name>
    <dbReference type="NCBI Taxonomy" id="300269"/>
    <lineage>
        <taxon>Bacteria</taxon>
        <taxon>Pseudomonadati</taxon>
        <taxon>Pseudomonadota</taxon>
        <taxon>Gammaproteobacteria</taxon>
        <taxon>Enterobacterales</taxon>
        <taxon>Enterobacteriaceae</taxon>
        <taxon>Shigella</taxon>
    </lineage>
</organism>
<feature type="chain" id="PRO_0000272689" description="Gamma-glutamyl-gamma-aminobutyrate hydrolase">
    <location>
        <begin position="1"/>
        <end position="254"/>
    </location>
</feature>
<feature type="domain" description="Glutamine amidotransferase type-1" evidence="2">
    <location>
        <begin position="16"/>
        <end position="250"/>
    </location>
</feature>
<feature type="active site" description="Nucleophile" evidence="2">
    <location>
        <position position="114"/>
    </location>
</feature>
<feature type="active site" evidence="2">
    <location>
        <position position="222"/>
    </location>
</feature>
<feature type="active site" evidence="2">
    <location>
        <position position="224"/>
    </location>
</feature>
<gene>
    <name type="primary">puuD</name>
    <name type="ordered locus">SSON_1842</name>
</gene>
<sequence>MENIMNNPVIGVVMCRNRLKGHATQTLQEKYLNAIIHAGGLPIALPHALAEPSLLEQLLPKLDGIYLPGSPSNVQPHLYGENGDEPDADPGRDLLSMAIINAALERRIPIFAICRGLQELVVATGGSLHRKLCEQPELLEHREDPELPVEQQYAPSHEVQVEEGGLLSALLPECSNFWVNSLHGQGAKVVSPRLRVEARSPDGLVEAVSVINHPFALGVQWHPEWNSSEYALSRILFEGFITACQHHIAEKQRL</sequence>
<proteinExistence type="inferred from homology"/>
<keyword id="KW-0315">Glutamine amidotransferase</keyword>
<keyword id="KW-0378">Hydrolase</keyword>
<keyword id="KW-1185">Reference proteome</keyword>
<reference key="1">
    <citation type="journal article" date="2005" name="Nucleic Acids Res.">
        <title>Genome dynamics and diversity of Shigella species, the etiologic agents of bacillary dysentery.</title>
        <authorList>
            <person name="Yang F."/>
            <person name="Yang J."/>
            <person name="Zhang X."/>
            <person name="Chen L."/>
            <person name="Jiang Y."/>
            <person name="Yan Y."/>
            <person name="Tang X."/>
            <person name="Wang J."/>
            <person name="Xiong Z."/>
            <person name="Dong J."/>
            <person name="Xue Y."/>
            <person name="Zhu Y."/>
            <person name="Xu X."/>
            <person name="Sun L."/>
            <person name="Chen S."/>
            <person name="Nie H."/>
            <person name="Peng J."/>
            <person name="Xu J."/>
            <person name="Wang Y."/>
            <person name="Yuan Z."/>
            <person name="Wen Y."/>
            <person name="Yao Z."/>
            <person name="Shen Y."/>
            <person name="Qiang B."/>
            <person name="Hou Y."/>
            <person name="Yu J."/>
            <person name="Jin Q."/>
        </authorList>
    </citation>
    <scope>NUCLEOTIDE SEQUENCE [LARGE SCALE GENOMIC DNA]</scope>
    <source>
        <strain>Ss046</strain>
    </source>
</reference>
<comment type="function">
    <text evidence="1">Involved in the breakdown of putrescine via hydrolysis of the gamma-glutamyl linkage of gamma-glutamyl-gamma-aminobutyrate.</text>
</comment>
<comment type="catalytic activity">
    <reaction>
        <text>4-(gamma-L-glutamylamino)butanoate + H2O = 4-aminobutanoate + L-glutamate</text>
        <dbReference type="Rhea" id="RHEA:19737"/>
        <dbReference type="ChEBI" id="CHEBI:15377"/>
        <dbReference type="ChEBI" id="CHEBI:29985"/>
        <dbReference type="ChEBI" id="CHEBI:58800"/>
        <dbReference type="ChEBI" id="CHEBI:59888"/>
        <dbReference type="EC" id="3.5.1.94"/>
    </reaction>
</comment>
<comment type="pathway">
    <text>Amine and polyamine degradation; putrescine degradation; 4-aminobutanoate from putrescine: step 4/4.</text>
</comment>
<comment type="similarity">
    <text evidence="3">Belongs to the peptidase C26 family.</text>
</comment>
<comment type="sequence caution" evidence="3">
    <conflict type="erroneous initiation">
        <sequence resource="EMBL-CDS" id="AAZ88516"/>
    </conflict>
</comment>
<protein>
    <recommendedName>
        <fullName>Gamma-glutamyl-gamma-aminobutyrate hydrolase</fullName>
        <shortName>Gamma-Glu-GABA hydrolase</shortName>
        <ecNumber>3.5.1.94</ecNumber>
    </recommendedName>
</protein>